<dbReference type="EC" id="2.3.1.129" evidence="1"/>
<dbReference type="EMBL" id="BA000037">
    <property type="protein sequence ID" value="BAC95309.1"/>
    <property type="status" value="ALT_INIT"/>
    <property type="molecule type" value="Genomic_DNA"/>
</dbReference>
<dbReference type="RefSeq" id="WP_011079774.1">
    <property type="nucleotide sequence ID" value="NC_005139.1"/>
</dbReference>
<dbReference type="SMR" id="Q7MIH1"/>
<dbReference type="STRING" id="672.VV93_v1c22640"/>
<dbReference type="KEGG" id="vvy:VV2545"/>
<dbReference type="eggNOG" id="COG1043">
    <property type="taxonomic scope" value="Bacteria"/>
</dbReference>
<dbReference type="HOGENOM" id="CLU_061249_0_0_6"/>
<dbReference type="UniPathway" id="UPA00359">
    <property type="reaction ID" value="UER00477"/>
</dbReference>
<dbReference type="Proteomes" id="UP000002675">
    <property type="component" value="Chromosome I"/>
</dbReference>
<dbReference type="GO" id="GO:0005737">
    <property type="term" value="C:cytoplasm"/>
    <property type="evidence" value="ECO:0007669"/>
    <property type="project" value="UniProtKB-SubCell"/>
</dbReference>
<dbReference type="GO" id="GO:0016020">
    <property type="term" value="C:membrane"/>
    <property type="evidence" value="ECO:0007669"/>
    <property type="project" value="GOC"/>
</dbReference>
<dbReference type="GO" id="GO:0008780">
    <property type="term" value="F:acyl-[acyl-carrier-protein]-UDP-N-acetylglucosamine O-acyltransferase activity"/>
    <property type="evidence" value="ECO:0007669"/>
    <property type="project" value="UniProtKB-UniRule"/>
</dbReference>
<dbReference type="GO" id="GO:0009245">
    <property type="term" value="P:lipid A biosynthetic process"/>
    <property type="evidence" value="ECO:0007669"/>
    <property type="project" value="UniProtKB-UniRule"/>
</dbReference>
<dbReference type="CDD" id="cd03351">
    <property type="entry name" value="LbH_UDP-GlcNAc_AT"/>
    <property type="match status" value="1"/>
</dbReference>
<dbReference type="FunFam" id="2.160.10.10:FF:000003">
    <property type="entry name" value="Acyl-[acyl-carrier-protein]--UDP-N-acetylglucosamine O-acyltransferase"/>
    <property type="match status" value="1"/>
</dbReference>
<dbReference type="Gene3D" id="2.160.10.10">
    <property type="entry name" value="Hexapeptide repeat proteins"/>
    <property type="match status" value="1"/>
</dbReference>
<dbReference type="Gene3D" id="1.20.1180.10">
    <property type="entry name" value="Udp N-acetylglucosamine O-acyltransferase, C-terminal domain"/>
    <property type="match status" value="1"/>
</dbReference>
<dbReference type="HAMAP" id="MF_00387">
    <property type="entry name" value="LpxA"/>
    <property type="match status" value="1"/>
</dbReference>
<dbReference type="InterPro" id="IPR029098">
    <property type="entry name" value="Acetyltransf_C"/>
</dbReference>
<dbReference type="InterPro" id="IPR037157">
    <property type="entry name" value="Acetyltransf_C_sf"/>
</dbReference>
<dbReference type="InterPro" id="IPR001451">
    <property type="entry name" value="Hexapep"/>
</dbReference>
<dbReference type="InterPro" id="IPR018357">
    <property type="entry name" value="Hexapep_transf_CS"/>
</dbReference>
<dbReference type="InterPro" id="IPR010137">
    <property type="entry name" value="Lipid_A_LpxA"/>
</dbReference>
<dbReference type="InterPro" id="IPR011004">
    <property type="entry name" value="Trimer_LpxA-like_sf"/>
</dbReference>
<dbReference type="NCBIfam" id="TIGR01852">
    <property type="entry name" value="lipid_A_lpxA"/>
    <property type="match status" value="1"/>
</dbReference>
<dbReference type="NCBIfam" id="NF003657">
    <property type="entry name" value="PRK05289.1"/>
    <property type="match status" value="1"/>
</dbReference>
<dbReference type="PANTHER" id="PTHR43480">
    <property type="entry name" value="ACYL-[ACYL-CARRIER-PROTEIN]--UDP-N-ACETYLGLUCOSAMINE O-ACYLTRANSFERASE"/>
    <property type="match status" value="1"/>
</dbReference>
<dbReference type="PANTHER" id="PTHR43480:SF1">
    <property type="entry name" value="ACYL-[ACYL-CARRIER-PROTEIN]--UDP-N-ACETYLGLUCOSAMINE O-ACYLTRANSFERASE, MITOCHONDRIAL-RELATED"/>
    <property type="match status" value="1"/>
</dbReference>
<dbReference type="Pfam" id="PF13720">
    <property type="entry name" value="Acetyltransf_11"/>
    <property type="match status" value="1"/>
</dbReference>
<dbReference type="Pfam" id="PF00132">
    <property type="entry name" value="Hexapep"/>
    <property type="match status" value="1"/>
</dbReference>
<dbReference type="PIRSF" id="PIRSF000456">
    <property type="entry name" value="UDP-GlcNAc_acltr"/>
    <property type="match status" value="1"/>
</dbReference>
<dbReference type="SUPFAM" id="SSF51161">
    <property type="entry name" value="Trimeric LpxA-like enzymes"/>
    <property type="match status" value="1"/>
</dbReference>
<dbReference type="PROSITE" id="PS00101">
    <property type="entry name" value="HEXAPEP_TRANSFERASES"/>
    <property type="match status" value="1"/>
</dbReference>
<name>LPXA_VIBVY</name>
<keyword id="KW-0012">Acyltransferase</keyword>
<keyword id="KW-0963">Cytoplasm</keyword>
<keyword id="KW-0441">Lipid A biosynthesis</keyword>
<keyword id="KW-0444">Lipid biosynthesis</keyword>
<keyword id="KW-0443">Lipid metabolism</keyword>
<keyword id="KW-0677">Repeat</keyword>
<keyword id="KW-0808">Transferase</keyword>
<reference key="1">
    <citation type="journal article" date="2003" name="Genome Res.">
        <title>Comparative genome analysis of Vibrio vulnificus, a marine pathogen.</title>
        <authorList>
            <person name="Chen C.-Y."/>
            <person name="Wu K.-M."/>
            <person name="Chang Y.-C."/>
            <person name="Chang C.-H."/>
            <person name="Tsai H.-C."/>
            <person name="Liao T.-L."/>
            <person name="Liu Y.-M."/>
            <person name="Chen H.-J."/>
            <person name="Shen A.B.-T."/>
            <person name="Li J.-C."/>
            <person name="Su T.-L."/>
            <person name="Shao C.-P."/>
            <person name="Lee C.-T."/>
            <person name="Hor L.-I."/>
            <person name="Tsai S.-F."/>
        </authorList>
    </citation>
    <scope>NUCLEOTIDE SEQUENCE [LARGE SCALE GENOMIC DNA]</scope>
    <source>
        <strain>YJ016</strain>
    </source>
</reference>
<sequence>MIDATAQIHPTAVVEEGAVIGANVKIGPFCYVDSKVEIGEGTELLSHVVVKGPTKIGKENRIFQFASIGEQCQDLKYAGEDTQLVIGDRNTIRESVTMHRGTVQDKGITIVGSDNLFMINAHVAHDCVIGDRCIFANNATLAGHVKVGNQAIVGGMSAIHQFCHIGDHCMLGGGSIVVQDVPPYVMAQGNHCAPFGINVEGLKRRGFEKKEILAIRRAYKTLYRSGLTLEAAKEEIAKETEAFPAVKLFLEFLEKSQRGIIR</sequence>
<evidence type="ECO:0000255" key="1">
    <source>
        <dbReference type="HAMAP-Rule" id="MF_00387"/>
    </source>
</evidence>
<evidence type="ECO:0000305" key="2"/>
<feature type="chain" id="PRO_0000188074" description="Acyl-[acyl-carrier-protein]--UDP-N-acetylglucosamine O-acyltransferase">
    <location>
        <begin position="1"/>
        <end position="262"/>
    </location>
</feature>
<organism>
    <name type="scientific">Vibrio vulnificus (strain YJ016)</name>
    <dbReference type="NCBI Taxonomy" id="196600"/>
    <lineage>
        <taxon>Bacteria</taxon>
        <taxon>Pseudomonadati</taxon>
        <taxon>Pseudomonadota</taxon>
        <taxon>Gammaproteobacteria</taxon>
        <taxon>Vibrionales</taxon>
        <taxon>Vibrionaceae</taxon>
        <taxon>Vibrio</taxon>
    </lineage>
</organism>
<gene>
    <name evidence="1" type="primary">lpxA</name>
    <name type="ordered locus">VV2545</name>
</gene>
<proteinExistence type="inferred from homology"/>
<comment type="function">
    <text evidence="1">Involved in the biosynthesis of lipid A, a phosphorylated glycolipid that anchors the lipopolysaccharide to the outer membrane of the cell.</text>
</comment>
<comment type="catalytic activity">
    <reaction evidence="1">
        <text>a (3R)-hydroxyacyl-[ACP] + UDP-N-acetyl-alpha-D-glucosamine = a UDP-3-O-[(3R)-3-hydroxyacyl]-N-acetyl-alpha-D-glucosamine + holo-[ACP]</text>
        <dbReference type="Rhea" id="RHEA:67812"/>
        <dbReference type="Rhea" id="RHEA-COMP:9685"/>
        <dbReference type="Rhea" id="RHEA-COMP:9945"/>
        <dbReference type="ChEBI" id="CHEBI:57705"/>
        <dbReference type="ChEBI" id="CHEBI:64479"/>
        <dbReference type="ChEBI" id="CHEBI:78827"/>
        <dbReference type="ChEBI" id="CHEBI:173225"/>
        <dbReference type="EC" id="2.3.1.129"/>
    </reaction>
</comment>
<comment type="pathway">
    <text evidence="1">Glycolipid biosynthesis; lipid IV(A) biosynthesis; lipid IV(A) from (3R)-3-hydroxytetradecanoyl-[acyl-carrier-protein] and UDP-N-acetyl-alpha-D-glucosamine: step 1/6.</text>
</comment>
<comment type="subunit">
    <text evidence="1">Homotrimer.</text>
</comment>
<comment type="subcellular location">
    <subcellularLocation>
        <location evidence="1">Cytoplasm</location>
    </subcellularLocation>
</comment>
<comment type="similarity">
    <text evidence="1">Belongs to the transferase hexapeptide repeat family. LpxA subfamily.</text>
</comment>
<comment type="sequence caution" evidence="2">
    <conflict type="erroneous initiation">
        <sequence resource="EMBL-CDS" id="BAC95309"/>
    </conflict>
</comment>
<accession>Q7MIH1</accession>
<protein>
    <recommendedName>
        <fullName evidence="1">Acyl-[acyl-carrier-protein]--UDP-N-acetylglucosamine O-acyltransferase</fullName>
        <shortName evidence="1">UDP-N-acetylglucosamine acyltransferase</shortName>
        <ecNumber evidence="1">2.3.1.129</ecNumber>
    </recommendedName>
</protein>